<feature type="chain" id="PRO_0000310092" description="Large ribosomal subunit protein uL2c">
    <location>
        <begin position="1"/>
        <end position="218"/>
    </location>
</feature>
<feature type="region of interest" description="Disordered" evidence="3">
    <location>
        <begin position="165"/>
        <end position="192"/>
    </location>
</feature>
<name>RK2_BIGNA</name>
<protein>
    <recommendedName>
        <fullName evidence="2">Large ribosomal subunit protein uL2c</fullName>
    </recommendedName>
    <alternativeName>
        <fullName evidence="4">50S ribosomal protein L2, chloroplastic</fullName>
    </alternativeName>
</protein>
<organism>
    <name type="scientific">Bigelowiella natans</name>
    <name type="common">Pedinomonas minutissima</name>
    <name type="synonym">Chlorarachnion sp. (strain CCMP621)</name>
    <dbReference type="NCBI Taxonomy" id="227086"/>
    <lineage>
        <taxon>Eukaryota</taxon>
        <taxon>Sar</taxon>
        <taxon>Rhizaria</taxon>
        <taxon>Cercozoa</taxon>
        <taxon>Chlorarachniophyceae</taxon>
        <taxon>Bigelowiella</taxon>
    </lineage>
</organism>
<reference key="1">
    <citation type="journal article" date="2007" name="Mol. Biol. Evol.">
        <title>The complete chloroplast genome of the chlorarachniophyte Bigelowiella natans: evidence for independent origins of chlorarachniophyte and euglenid secondary endosymbionts.</title>
        <authorList>
            <person name="Rogers M.B."/>
            <person name="Gilson P.R."/>
            <person name="Su V."/>
            <person name="McFadden G.I."/>
            <person name="Keeling P.J."/>
        </authorList>
    </citation>
    <scope>NUCLEOTIDE SEQUENCE [LARGE SCALE GENOMIC DNA]</scope>
</reference>
<geneLocation type="chloroplast"/>
<keyword id="KW-0150">Chloroplast</keyword>
<keyword id="KW-0934">Plastid</keyword>
<keyword id="KW-0687">Ribonucleoprotein</keyword>
<keyword id="KW-0689">Ribosomal protein</keyword>
<accession>Q06J61</accession>
<proteinExistence type="inferred from homology"/>
<dbReference type="EMBL" id="DQ851108">
    <property type="protein sequence ID" value="ABG91398.1"/>
    <property type="molecule type" value="Genomic_DNA"/>
</dbReference>
<dbReference type="RefSeq" id="YP_778566.1">
    <property type="nucleotide sequence ID" value="NC_008408.1"/>
</dbReference>
<dbReference type="SMR" id="Q06J61"/>
<dbReference type="GeneID" id="4352983"/>
<dbReference type="GO" id="GO:0009507">
    <property type="term" value="C:chloroplast"/>
    <property type="evidence" value="ECO:0007669"/>
    <property type="project" value="UniProtKB-SubCell"/>
</dbReference>
<dbReference type="GO" id="GO:0005762">
    <property type="term" value="C:mitochondrial large ribosomal subunit"/>
    <property type="evidence" value="ECO:0007669"/>
    <property type="project" value="TreeGrafter"/>
</dbReference>
<dbReference type="GO" id="GO:0003723">
    <property type="term" value="F:RNA binding"/>
    <property type="evidence" value="ECO:0007669"/>
    <property type="project" value="InterPro"/>
</dbReference>
<dbReference type="GO" id="GO:0003735">
    <property type="term" value="F:structural constituent of ribosome"/>
    <property type="evidence" value="ECO:0007669"/>
    <property type="project" value="InterPro"/>
</dbReference>
<dbReference type="GO" id="GO:0016740">
    <property type="term" value="F:transferase activity"/>
    <property type="evidence" value="ECO:0007669"/>
    <property type="project" value="InterPro"/>
</dbReference>
<dbReference type="GO" id="GO:0032543">
    <property type="term" value="P:mitochondrial translation"/>
    <property type="evidence" value="ECO:0007669"/>
    <property type="project" value="TreeGrafter"/>
</dbReference>
<dbReference type="FunFam" id="2.30.30.30:FF:000001">
    <property type="entry name" value="50S ribosomal protein L2"/>
    <property type="match status" value="1"/>
</dbReference>
<dbReference type="FunFam" id="4.10.950.10:FF:000001">
    <property type="entry name" value="50S ribosomal protein L2"/>
    <property type="match status" value="1"/>
</dbReference>
<dbReference type="Gene3D" id="2.30.30.30">
    <property type="match status" value="1"/>
</dbReference>
<dbReference type="Gene3D" id="2.40.50.140">
    <property type="entry name" value="Nucleic acid-binding proteins"/>
    <property type="match status" value="1"/>
</dbReference>
<dbReference type="Gene3D" id="4.10.950.10">
    <property type="entry name" value="Ribosomal protein L2, domain 3"/>
    <property type="match status" value="1"/>
</dbReference>
<dbReference type="InterPro" id="IPR012340">
    <property type="entry name" value="NA-bd_OB-fold"/>
</dbReference>
<dbReference type="InterPro" id="IPR014722">
    <property type="entry name" value="Rib_uL2_dom2"/>
</dbReference>
<dbReference type="InterPro" id="IPR002171">
    <property type="entry name" value="Ribosomal_uL2"/>
</dbReference>
<dbReference type="InterPro" id="IPR005880">
    <property type="entry name" value="Ribosomal_uL2_bac/org-type"/>
</dbReference>
<dbReference type="InterPro" id="IPR022669">
    <property type="entry name" value="Ribosomal_uL2_C"/>
</dbReference>
<dbReference type="InterPro" id="IPR022671">
    <property type="entry name" value="Ribosomal_uL2_CS"/>
</dbReference>
<dbReference type="InterPro" id="IPR014726">
    <property type="entry name" value="Ribosomal_uL2_dom3"/>
</dbReference>
<dbReference type="InterPro" id="IPR022666">
    <property type="entry name" value="Ribosomal_uL2_RNA-bd_dom"/>
</dbReference>
<dbReference type="InterPro" id="IPR008991">
    <property type="entry name" value="Translation_prot_SH3-like_sf"/>
</dbReference>
<dbReference type="NCBIfam" id="TIGR01171">
    <property type="entry name" value="rplB_bact"/>
    <property type="match status" value="1"/>
</dbReference>
<dbReference type="PANTHER" id="PTHR13691:SF5">
    <property type="entry name" value="LARGE RIBOSOMAL SUBUNIT PROTEIN UL2M"/>
    <property type="match status" value="1"/>
</dbReference>
<dbReference type="PANTHER" id="PTHR13691">
    <property type="entry name" value="RIBOSOMAL PROTEIN L2"/>
    <property type="match status" value="1"/>
</dbReference>
<dbReference type="Pfam" id="PF00181">
    <property type="entry name" value="Ribosomal_L2"/>
    <property type="match status" value="1"/>
</dbReference>
<dbReference type="Pfam" id="PF03947">
    <property type="entry name" value="Ribosomal_L2_C"/>
    <property type="match status" value="1"/>
</dbReference>
<dbReference type="SMART" id="SM01382">
    <property type="entry name" value="Ribosomal_L2_C"/>
    <property type="match status" value="1"/>
</dbReference>
<dbReference type="SUPFAM" id="SSF50249">
    <property type="entry name" value="Nucleic acid-binding proteins"/>
    <property type="match status" value="1"/>
</dbReference>
<dbReference type="SUPFAM" id="SSF50104">
    <property type="entry name" value="Translation proteins SH3-like domain"/>
    <property type="match status" value="1"/>
</dbReference>
<dbReference type="PROSITE" id="PS00467">
    <property type="entry name" value="RIBOSOMAL_L2"/>
    <property type="match status" value="1"/>
</dbReference>
<comment type="subunit">
    <text evidence="1">Part of the 50S ribosomal subunit.</text>
</comment>
<comment type="subcellular location">
    <subcellularLocation>
        <location>Plastid</location>
        <location>Chloroplast</location>
    </subcellularLocation>
</comment>
<comment type="similarity">
    <text evidence="4">Belongs to the universal ribosomal protein uL2 family.</text>
</comment>
<gene>
    <name type="primary">rpl2</name>
</gene>
<evidence type="ECO:0000250" key="1"/>
<evidence type="ECO:0000255" key="2">
    <source>
        <dbReference type="HAMAP-Rule" id="MF_01320"/>
    </source>
</evidence>
<evidence type="ECO:0000256" key="3">
    <source>
        <dbReference type="SAM" id="MobiDB-lite"/>
    </source>
</evidence>
<evidence type="ECO:0000305" key="4"/>
<sequence>MTKFSQNIDYLRNKVFVPGVVLSTLYSPGLSAKTCIIKYLDGEVRKILCPTGLKPGNSVLTGIEIPIALGNHLLLKNLPLGTDIHNVELYPGCGGKLARAGGTFANVIAKEGSYVTLRLPSGEVRFISKYCWATIGRICEKNNGKKALYKAGQNRWIGKRPHVRGVVKNPVDHPHGGGEGRSPIGRSHPVTPWGRIALGQRTRKSKRYSDLLILSRRK</sequence>